<sequence length="203" mass="22738">MRGTLYIVAAPSGAGKSSIVNATLARDPKIALSISFTSRAPRPGERHAEHYHFVSAEEFQGMIEAGDFFEYALVHGDWKGTARQSVEPQLAAGHDVLLEIDWQGARQVRQKVPDAVSVFILPPSRQALDERMRKRGQDSEDVMAQRLAAAREEMLHFEEFDYVIINETFDTAVSEMCAIFTASRLRRQAQQQRHAGLIQALLD</sequence>
<comment type="function">
    <text evidence="1">Essential for recycling GMP and indirectly, cGMP.</text>
</comment>
<comment type="catalytic activity">
    <reaction evidence="1">
        <text>GMP + ATP = GDP + ADP</text>
        <dbReference type="Rhea" id="RHEA:20780"/>
        <dbReference type="ChEBI" id="CHEBI:30616"/>
        <dbReference type="ChEBI" id="CHEBI:58115"/>
        <dbReference type="ChEBI" id="CHEBI:58189"/>
        <dbReference type="ChEBI" id="CHEBI:456216"/>
        <dbReference type="EC" id="2.7.4.8"/>
    </reaction>
</comment>
<comment type="subcellular location">
    <subcellularLocation>
        <location evidence="1">Cytoplasm</location>
    </subcellularLocation>
</comment>
<comment type="similarity">
    <text evidence="1">Belongs to the guanylate kinase family.</text>
</comment>
<organism>
    <name type="scientific">Xanthomonas campestris pv. campestris (strain ATCC 33913 / DSM 3586 / NCPPB 528 / LMG 568 / P 25)</name>
    <dbReference type="NCBI Taxonomy" id="190485"/>
    <lineage>
        <taxon>Bacteria</taxon>
        <taxon>Pseudomonadati</taxon>
        <taxon>Pseudomonadota</taxon>
        <taxon>Gammaproteobacteria</taxon>
        <taxon>Lysobacterales</taxon>
        <taxon>Lysobacteraceae</taxon>
        <taxon>Xanthomonas</taxon>
    </lineage>
</organism>
<keyword id="KW-0067">ATP-binding</keyword>
<keyword id="KW-0963">Cytoplasm</keyword>
<keyword id="KW-0418">Kinase</keyword>
<keyword id="KW-0547">Nucleotide-binding</keyword>
<keyword id="KW-1185">Reference proteome</keyword>
<keyword id="KW-0808">Transferase</keyword>
<gene>
    <name evidence="1" type="primary">gmk</name>
    <name type="ordered locus">XCC3249</name>
</gene>
<accession>Q8P5T7</accession>
<protein>
    <recommendedName>
        <fullName evidence="1">Guanylate kinase</fullName>
        <ecNumber evidence="1">2.7.4.8</ecNumber>
    </recommendedName>
    <alternativeName>
        <fullName evidence="1">GMP kinase</fullName>
    </alternativeName>
</protein>
<reference key="1">
    <citation type="journal article" date="2002" name="Nature">
        <title>Comparison of the genomes of two Xanthomonas pathogens with differing host specificities.</title>
        <authorList>
            <person name="da Silva A.C.R."/>
            <person name="Ferro J.A."/>
            <person name="Reinach F.C."/>
            <person name="Farah C.S."/>
            <person name="Furlan L.R."/>
            <person name="Quaggio R.B."/>
            <person name="Monteiro-Vitorello C.B."/>
            <person name="Van Sluys M.A."/>
            <person name="Almeida N.F. Jr."/>
            <person name="Alves L.M.C."/>
            <person name="do Amaral A.M."/>
            <person name="Bertolini M.C."/>
            <person name="Camargo L.E.A."/>
            <person name="Camarotte G."/>
            <person name="Cannavan F."/>
            <person name="Cardozo J."/>
            <person name="Chambergo F."/>
            <person name="Ciapina L.P."/>
            <person name="Cicarelli R.M.B."/>
            <person name="Coutinho L.L."/>
            <person name="Cursino-Santos J.R."/>
            <person name="El-Dorry H."/>
            <person name="Faria J.B."/>
            <person name="Ferreira A.J.S."/>
            <person name="Ferreira R.C.C."/>
            <person name="Ferro M.I.T."/>
            <person name="Formighieri E.F."/>
            <person name="Franco M.C."/>
            <person name="Greggio C.C."/>
            <person name="Gruber A."/>
            <person name="Katsuyama A.M."/>
            <person name="Kishi L.T."/>
            <person name="Leite R.P."/>
            <person name="Lemos E.G.M."/>
            <person name="Lemos M.V.F."/>
            <person name="Locali E.C."/>
            <person name="Machado M.A."/>
            <person name="Madeira A.M.B.N."/>
            <person name="Martinez-Rossi N.M."/>
            <person name="Martins E.C."/>
            <person name="Meidanis J."/>
            <person name="Menck C.F.M."/>
            <person name="Miyaki C.Y."/>
            <person name="Moon D.H."/>
            <person name="Moreira L.M."/>
            <person name="Novo M.T.M."/>
            <person name="Okura V.K."/>
            <person name="Oliveira M.C."/>
            <person name="Oliveira V.R."/>
            <person name="Pereira H.A."/>
            <person name="Rossi A."/>
            <person name="Sena J.A.D."/>
            <person name="Silva C."/>
            <person name="de Souza R.F."/>
            <person name="Spinola L.A.F."/>
            <person name="Takita M.A."/>
            <person name="Tamura R.E."/>
            <person name="Teixeira E.C."/>
            <person name="Tezza R.I.D."/>
            <person name="Trindade dos Santos M."/>
            <person name="Truffi D."/>
            <person name="Tsai S.M."/>
            <person name="White F.F."/>
            <person name="Setubal J.C."/>
            <person name="Kitajima J.P."/>
        </authorList>
    </citation>
    <scope>NUCLEOTIDE SEQUENCE [LARGE SCALE GENOMIC DNA]</scope>
    <source>
        <strain>ATCC 33913 / DSM 3586 / NCPPB 528 / LMG 568 / P 25</strain>
    </source>
</reference>
<evidence type="ECO:0000255" key="1">
    <source>
        <dbReference type="HAMAP-Rule" id="MF_00328"/>
    </source>
</evidence>
<feature type="chain" id="PRO_0000170644" description="Guanylate kinase">
    <location>
        <begin position="1"/>
        <end position="203"/>
    </location>
</feature>
<feature type="domain" description="Guanylate kinase-like" evidence="1">
    <location>
        <begin position="3"/>
        <end position="181"/>
    </location>
</feature>
<feature type="binding site" evidence="1">
    <location>
        <begin position="10"/>
        <end position="17"/>
    </location>
    <ligand>
        <name>ATP</name>
        <dbReference type="ChEBI" id="CHEBI:30616"/>
    </ligand>
</feature>
<dbReference type="EC" id="2.7.4.8" evidence="1"/>
<dbReference type="EMBL" id="AE008922">
    <property type="protein sequence ID" value="AAM42519.1"/>
    <property type="molecule type" value="Genomic_DNA"/>
</dbReference>
<dbReference type="RefSeq" id="NP_638595.1">
    <property type="nucleotide sequence ID" value="NC_003902.1"/>
</dbReference>
<dbReference type="RefSeq" id="WP_011038351.1">
    <property type="nucleotide sequence ID" value="NC_003902.1"/>
</dbReference>
<dbReference type="SMR" id="Q8P5T7"/>
<dbReference type="STRING" id="190485.XCC3249"/>
<dbReference type="EnsemblBacteria" id="AAM42519">
    <property type="protein sequence ID" value="AAM42519"/>
    <property type="gene ID" value="XCC3249"/>
</dbReference>
<dbReference type="GeneID" id="77336350"/>
<dbReference type="KEGG" id="xcc:XCC3249"/>
<dbReference type="PATRIC" id="fig|190485.4.peg.3472"/>
<dbReference type="eggNOG" id="COG0194">
    <property type="taxonomic scope" value="Bacteria"/>
</dbReference>
<dbReference type="HOGENOM" id="CLU_001715_1_0_6"/>
<dbReference type="OrthoDB" id="9808150at2"/>
<dbReference type="Proteomes" id="UP000001010">
    <property type="component" value="Chromosome"/>
</dbReference>
<dbReference type="GO" id="GO:0005829">
    <property type="term" value="C:cytosol"/>
    <property type="evidence" value="ECO:0000318"/>
    <property type="project" value="GO_Central"/>
</dbReference>
<dbReference type="GO" id="GO:0005524">
    <property type="term" value="F:ATP binding"/>
    <property type="evidence" value="ECO:0007669"/>
    <property type="project" value="UniProtKB-UniRule"/>
</dbReference>
<dbReference type="GO" id="GO:0004385">
    <property type="term" value="F:guanylate kinase activity"/>
    <property type="evidence" value="ECO:0000318"/>
    <property type="project" value="GO_Central"/>
</dbReference>
<dbReference type="CDD" id="cd00071">
    <property type="entry name" value="GMPK"/>
    <property type="match status" value="1"/>
</dbReference>
<dbReference type="FunFam" id="3.30.63.10:FF:000005">
    <property type="entry name" value="Guanylate kinase"/>
    <property type="match status" value="1"/>
</dbReference>
<dbReference type="FunFam" id="3.40.50.300:FF:000084">
    <property type="entry name" value="Guanylate kinase"/>
    <property type="match status" value="1"/>
</dbReference>
<dbReference type="Gene3D" id="3.30.63.10">
    <property type="entry name" value="Guanylate Kinase phosphate binding domain"/>
    <property type="match status" value="1"/>
</dbReference>
<dbReference type="Gene3D" id="3.40.50.300">
    <property type="entry name" value="P-loop containing nucleotide triphosphate hydrolases"/>
    <property type="match status" value="1"/>
</dbReference>
<dbReference type="HAMAP" id="MF_00328">
    <property type="entry name" value="Guanylate_kinase"/>
    <property type="match status" value="1"/>
</dbReference>
<dbReference type="InterPro" id="IPR008145">
    <property type="entry name" value="GK/Ca_channel_bsu"/>
</dbReference>
<dbReference type="InterPro" id="IPR008144">
    <property type="entry name" value="Guanylate_kin-like_dom"/>
</dbReference>
<dbReference type="InterPro" id="IPR017665">
    <property type="entry name" value="Guanylate_kinase"/>
</dbReference>
<dbReference type="InterPro" id="IPR020590">
    <property type="entry name" value="Guanylate_kinase_CS"/>
</dbReference>
<dbReference type="InterPro" id="IPR027417">
    <property type="entry name" value="P-loop_NTPase"/>
</dbReference>
<dbReference type="NCBIfam" id="TIGR03263">
    <property type="entry name" value="guanyl_kin"/>
    <property type="match status" value="1"/>
</dbReference>
<dbReference type="PANTHER" id="PTHR23117:SF13">
    <property type="entry name" value="GUANYLATE KINASE"/>
    <property type="match status" value="1"/>
</dbReference>
<dbReference type="PANTHER" id="PTHR23117">
    <property type="entry name" value="GUANYLATE KINASE-RELATED"/>
    <property type="match status" value="1"/>
</dbReference>
<dbReference type="Pfam" id="PF00625">
    <property type="entry name" value="Guanylate_kin"/>
    <property type="match status" value="1"/>
</dbReference>
<dbReference type="SMART" id="SM00072">
    <property type="entry name" value="GuKc"/>
    <property type="match status" value="1"/>
</dbReference>
<dbReference type="SUPFAM" id="SSF52540">
    <property type="entry name" value="P-loop containing nucleoside triphosphate hydrolases"/>
    <property type="match status" value="1"/>
</dbReference>
<dbReference type="PROSITE" id="PS00856">
    <property type="entry name" value="GUANYLATE_KINASE_1"/>
    <property type="match status" value="1"/>
</dbReference>
<dbReference type="PROSITE" id="PS50052">
    <property type="entry name" value="GUANYLATE_KINASE_2"/>
    <property type="match status" value="1"/>
</dbReference>
<name>KGUA_XANCP</name>
<proteinExistence type="inferred from homology"/>